<evidence type="ECO:0000255" key="1">
    <source>
        <dbReference type="HAMAP-Rule" id="MF_00110"/>
    </source>
</evidence>
<dbReference type="EC" id="4.2.3.4" evidence="1"/>
<dbReference type="EMBL" id="CP000075">
    <property type="protein sequence ID" value="AAY35479.1"/>
    <property type="molecule type" value="Genomic_DNA"/>
</dbReference>
<dbReference type="RefSeq" id="WP_003403032.1">
    <property type="nucleotide sequence ID" value="NC_007005.1"/>
</dbReference>
<dbReference type="RefSeq" id="YP_233517.1">
    <property type="nucleotide sequence ID" value="NC_007005.1"/>
</dbReference>
<dbReference type="SMR" id="Q4ZZE3"/>
<dbReference type="STRING" id="205918.Psyr_0409"/>
<dbReference type="KEGG" id="psb:Psyr_0409"/>
<dbReference type="PATRIC" id="fig|205918.7.peg.424"/>
<dbReference type="eggNOG" id="COG0337">
    <property type="taxonomic scope" value="Bacteria"/>
</dbReference>
<dbReference type="HOGENOM" id="CLU_001201_0_2_6"/>
<dbReference type="OrthoDB" id="9806583at2"/>
<dbReference type="UniPathway" id="UPA00053">
    <property type="reaction ID" value="UER00085"/>
</dbReference>
<dbReference type="Proteomes" id="UP000000426">
    <property type="component" value="Chromosome"/>
</dbReference>
<dbReference type="GO" id="GO:0005737">
    <property type="term" value="C:cytoplasm"/>
    <property type="evidence" value="ECO:0007669"/>
    <property type="project" value="UniProtKB-SubCell"/>
</dbReference>
<dbReference type="GO" id="GO:0003856">
    <property type="term" value="F:3-dehydroquinate synthase activity"/>
    <property type="evidence" value="ECO:0007669"/>
    <property type="project" value="UniProtKB-UniRule"/>
</dbReference>
<dbReference type="GO" id="GO:0046872">
    <property type="term" value="F:metal ion binding"/>
    <property type="evidence" value="ECO:0007669"/>
    <property type="project" value="UniProtKB-KW"/>
</dbReference>
<dbReference type="GO" id="GO:0000166">
    <property type="term" value="F:nucleotide binding"/>
    <property type="evidence" value="ECO:0007669"/>
    <property type="project" value="UniProtKB-KW"/>
</dbReference>
<dbReference type="GO" id="GO:0008652">
    <property type="term" value="P:amino acid biosynthetic process"/>
    <property type="evidence" value="ECO:0007669"/>
    <property type="project" value="UniProtKB-KW"/>
</dbReference>
<dbReference type="GO" id="GO:0009073">
    <property type="term" value="P:aromatic amino acid family biosynthetic process"/>
    <property type="evidence" value="ECO:0007669"/>
    <property type="project" value="UniProtKB-KW"/>
</dbReference>
<dbReference type="GO" id="GO:0009423">
    <property type="term" value="P:chorismate biosynthetic process"/>
    <property type="evidence" value="ECO:0007669"/>
    <property type="project" value="UniProtKB-UniRule"/>
</dbReference>
<dbReference type="CDD" id="cd08195">
    <property type="entry name" value="DHQS"/>
    <property type="match status" value="1"/>
</dbReference>
<dbReference type="FunFam" id="1.20.1090.10:FF:000002">
    <property type="entry name" value="3-dehydroquinate synthase"/>
    <property type="match status" value="1"/>
</dbReference>
<dbReference type="FunFam" id="3.40.50.1970:FF:000001">
    <property type="entry name" value="3-dehydroquinate synthase"/>
    <property type="match status" value="1"/>
</dbReference>
<dbReference type="Gene3D" id="3.40.50.1970">
    <property type="match status" value="1"/>
</dbReference>
<dbReference type="Gene3D" id="1.20.1090.10">
    <property type="entry name" value="Dehydroquinate synthase-like - alpha domain"/>
    <property type="match status" value="1"/>
</dbReference>
<dbReference type="HAMAP" id="MF_00110">
    <property type="entry name" value="DHQ_synthase"/>
    <property type="match status" value="1"/>
</dbReference>
<dbReference type="InterPro" id="IPR050071">
    <property type="entry name" value="Dehydroquinate_synthase"/>
</dbReference>
<dbReference type="InterPro" id="IPR016037">
    <property type="entry name" value="DHQ_synth_AroB"/>
</dbReference>
<dbReference type="InterPro" id="IPR030963">
    <property type="entry name" value="DHQ_synth_fam"/>
</dbReference>
<dbReference type="InterPro" id="IPR030960">
    <property type="entry name" value="DHQS/DOIS_N"/>
</dbReference>
<dbReference type="InterPro" id="IPR056179">
    <property type="entry name" value="DHQS_C"/>
</dbReference>
<dbReference type="NCBIfam" id="TIGR01357">
    <property type="entry name" value="aroB"/>
    <property type="match status" value="1"/>
</dbReference>
<dbReference type="PANTHER" id="PTHR43622">
    <property type="entry name" value="3-DEHYDROQUINATE SYNTHASE"/>
    <property type="match status" value="1"/>
</dbReference>
<dbReference type="PANTHER" id="PTHR43622:SF7">
    <property type="entry name" value="3-DEHYDROQUINATE SYNTHASE, CHLOROPLASTIC"/>
    <property type="match status" value="1"/>
</dbReference>
<dbReference type="Pfam" id="PF01761">
    <property type="entry name" value="DHQ_synthase"/>
    <property type="match status" value="1"/>
</dbReference>
<dbReference type="Pfam" id="PF24621">
    <property type="entry name" value="DHQS_C"/>
    <property type="match status" value="1"/>
</dbReference>
<dbReference type="PIRSF" id="PIRSF001455">
    <property type="entry name" value="DHQ_synth"/>
    <property type="match status" value="1"/>
</dbReference>
<dbReference type="SUPFAM" id="SSF56796">
    <property type="entry name" value="Dehydroquinate synthase-like"/>
    <property type="match status" value="1"/>
</dbReference>
<name>AROB_PSEU2</name>
<feature type="chain" id="PRO_0000231117" description="3-dehydroquinate synthase">
    <location>
        <begin position="1"/>
        <end position="367"/>
    </location>
</feature>
<feature type="binding site" evidence="1">
    <location>
        <begin position="69"/>
        <end position="74"/>
    </location>
    <ligand>
        <name>NAD(+)</name>
        <dbReference type="ChEBI" id="CHEBI:57540"/>
    </ligand>
</feature>
<feature type="binding site" evidence="1">
    <location>
        <begin position="103"/>
        <end position="107"/>
    </location>
    <ligand>
        <name>NAD(+)</name>
        <dbReference type="ChEBI" id="CHEBI:57540"/>
    </ligand>
</feature>
<feature type="binding site" evidence="1">
    <location>
        <begin position="127"/>
        <end position="128"/>
    </location>
    <ligand>
        <name>NAD(+)</name>
        <dbReference type="ChEBI" id="CHEBI:57540"/>
    </ligand>
</feature>
<feature type="binding site" evidence="1">
    <location>
        <position position="140"/>
    </location>
    <ligand>
        <name>NAD(+)</name>
        <dbReference type="ChEBI" id="CHEBI:57540"/>
    </ligand>
</feature>
<feature type="binding site" evidence="1">
    <location>
        <position position="149"/>
    </location>
    <ligand>
        <name>NAD(+)</name>
        <dbReference type="ChEBI" id="CHEBI:57540"/>
    </ligand>
</feature>
<feature type="binding site" evidence="1">
    <location>
        <position position="182"/>
    </location>
    <ligand>
        <name>Zn(2+)</name>
        <dbReference type="ChEBI" id="CHEBI:29105"/>
    </ligand>
</feature>
<feature type="binding site" evidence="1">
    <location>
        <position position="245"/>
    </location>
    <ligand>
        <name>Zn(2+)</name>
        <dbReference type="ChEBI" id="CHEBI:29105"/>
    </ligand>
</feature>
<feature type="binding site" evidence="1">
    <location>
        <position position="262"/>
    </location>
    <ligand>
        <name>Zn(2+)</name>
        <dbReference type="ChEBI" id="CHEBI:29105"/>
    </ligand>
</feature>
<reference key="1">
    <citation type="journal article" date="2005" name="Proc. Natl. Acad. Sci. U.S.A.">
        <title>Comparison of the complete genome sequences of Pseudomonas syringae pv. syringae B728a and pv. tomato DC3000.</title>
        <authorList>
            <person name="Feil H."/>
            <person name="Feil W.S."/>
            <person name="Chain P."/>
            <person name="Larimer F."/>
            <person name="Dibartolo G."/>
            <person name="Copeland A."/>
            <person name="Lykidis A."/>
            <person name="Trong S."/>
            <person name="Nolan M."/>
            <person name="Goltsman E."/>
            <person name="Thiel J."/>
            <person name="Malfatti S."/>
            <person name="Loper J.E."/>
            <person name="Lapidus A."/>
            <person name="Detter J.C."/>
            <person name="Land M."/>
            <person name="Richardson P.M."/>
            <person name="Kyrpides N.C."/>
            <person name="Ivanova N."/>
            <person name="Lindow S.E."/>
        </authorList>
    </citation>
    <scope>NUCLEOTIDE SEQUENCE [LARGE SCALE GENOMIC DNA]</scope>
    <source>
        <strain>B728a</strain>
    </source>
</reference>
<gene>
    <name evidence="1" type="primary">aroB</name>
    <name type="ordered locus">Psyr_0409</name>
</gene>
<organism>
    <name type="scientific">Pseudomonas syringae pv. syringae (strain B728a)</name>
    <dbReference type="NCBI Taxonomy" id="205918"/>
    <lineage>
        <taxon>Bacteria</taxon>
        <taxon>Pseudomonadati</taxon>
        <taxon>Pseudomonadota</taxon>
        <taxon>Gammaproteobacteria</taxon>
        <taxon>Pseudomonadales</taxon>
        <taxon>Pseudomonadaceae</taxon>
        <taxon>Pseudomonas</taxon>
        <taxon>Pseudomonas syringae</taxon>
    </lineage>
</organism>
<protein>
    <recommendedName>
        <fullName evidence="1">3-dehydroquinate synthase</fullName>
        <shortName evidence="1">DHQS</shortName>
        <ecNumber evidence="1">4.2.3.4</ecNumber>
    </recommendedName>
</protein>
<sequence>MQTLKVELGERSYPIHIGEGLLDQPELLTPHIVGRQVAIVSNTTVAPLYLERLTQTLAGYNVLPIVLPDGEAFKNWETLQTIFDGLLTARHDRRTTVIALGGGVIGDMAGFAAACYQRGVNFIQIPTTLLSQVDSSVGGKTGINHPLGKNMVGAFYQPSVVLIDTASLNTLPERELSAGLAEVIKYGLICDEPFLTWLEEHVDALRGLDQAALTVAIERSCAAKALVVGADERESGVRATLNLGHTFGHAIETHMGYGVWLHGEAVAAGTVMALEMSSRLGWISTQERDRGIRLFQRAGLPVVPPQDMTQDNFLEHMAIDKKVIDGRLRLVLLRRMGEAVITDEYPKEVLQATLVADYRALVDQLRG</sequence>
<keyword id="KW-0028">Amino-acid biosynthesis</keyword>
<keyword id="KW-0057">Aromatic amino acid biosynthesis</keyword>
<keyword id="KW-0170">Cobalt</keyword>
<keyword id="KW-0963">Cytoplasm</keyword>
<keyword id="KW-0456">Lyase</keyword>
<keyword id="KW-0479">Metal-binding</keyword>
<keyword id="KW-0520">NAD</keyword>
<keyword id="KW-0547">Nucleotide-binding</keyword>
<keyword id="KW-0862">Zinc</keyword>
<accession>Q4ZZE3</accession>
<comment type="function">
    <text evidence="1">Catalyzes the conversion of 3-deoxy-D-arabino-heptulosonate 7-phosphate (DAHP) to dehydroquinate (DHQ).</text>
</comment>
<comment type="catalytic activity">
    <reaction evidence="1">
        <text>7-phospho-2-dehydro-3-deoxy-D-arabino-heptonate = 3-dehydroquinate + phosphate</text>
        <dbReference type="Rhea" id="RHEA:21968"/>
        <dbReference type="ChEBI" id="CHEBI:32364"/>
        <dbReference type="ChEBI" id="CHEBI:43474"/>
        <dbReference type="ChEBI" id="CHEBI:58394"/>
        <dbReference type="EC" id="4.2.3.4"/>
    </reaction>
</comment>
<comment type="cofactor">
    <cofactor evidence="1">
        <name>Co(2+)</name>
        <dbReference type="ChEBI" id="CHEBI:48828"/>
    </cofactor>
    <cofactor evidence="1">
        <name>Zn(2+)</name>
        <dbReference type="ChEBI" id="CHEBI:29105"/>
    </cofactor>
    <text evidence="1">Binds 1 divalent metal cation per subunit. Can use either Co(2+) or Zn(2+).</text>
</comment>
<comment type="cofactor">
    <cofactor evidence="1">
        <name>NAD(+)</name>
        <dbReference type="ChEBI" id="CHEBI:57540"/>
    </cofactor>
</comment>
<comment type="pathway">
    <text evidence="1">Metabolic intermediate biosynthesis; chorismate biosynthesis; chorismate from D-erythrose 4-phosphate and phosphoenolpyruvate: step 2/7.</text>
</comment>
<comment type="subcellular location">
    <subcellularLocation>
        <location evidence="1">Cytoplasm</location>
    </subcellularLocation>
</comment>
<comment type="similarity">
    <text evidence="1">Belongs to the sugar phosphate cyclases superfamily. Dehydroquinate synthase family.</text>
</comment>
<proteinExistence type="inferred from homology"/>